<gene>
    <name evidence="1" type="primary">rpsM</name>
    <name type="ordered locus">SAV2226</name>
</gene>
<keyword id="KW-0687">Ribonucleoprotein</keyword>
<keyword id="KW-0689">Ribosomal protein</keyword>
<keyword id="KW-0694">RNA-binding</keyword>
<keyword id="KW-0699">rRNA-binding</keyword>
<keyword id="KW-0820">tRNA-binding</keyword>
<proteinExistence type="inferred from homology"/>
<sequence>MARIAGVDIPREKRVVISLTYIYGIGTSTAQKILEEANVSADTRVKDLTDDELGRIREVVDGYKVEGDLRRETNLNIKRLMEISSYRGIRHRRGLPVRGQKTKNNARTRKGPVKTVANKKK</sequence>
<evidence type="ECO:0000255" key="1">
    <source>
        <dbReference type="HAMAP-Rule" id="MF_01315"/>
    </source>
</evidence>
<evidence type="ECO:0000256" key="2">
    <source>
        <dbReference type="SAM" id="MobiDB-lite"/>
    </source>
</evidence>
<evidence type="ECO:0000305" key="3"/>
<accession>P66387</accession>
<accession>Q99S43</accession>
<protein>
    <recommendedName>
        <fullName evidence="1">Small ribosomal subunit protein uS13</fullName>
    </recommendedName>
    <alternativeName>
        <fullName evidence="3">30S ribosomal protein S13</fullName>
    </alternativeName>
</protein>
<dbReference type="EMBL" id="BA000017">
    <property type="protein sequence ID" value="BAB58388.1"/>
    <property type="molecule type" value="Genomic_DNA"/>
</dbReference>
<dbReference type="RefSeq" id="WP_000090796.1">
    <property type="nucleotide sequence ID" value="NC_002758.2"/>
</dbReference>
<dbReference type="SMR" id="P66387"/>
<dbReference type="GeneID" id="66840438"/>
<dbReference type="KEGG" id="sav:SAV2226"/>
<dbReference type="HOGENOM" id="CLU_103849_1_1_9"/>
<dbReference type="PhylomeDB" id="P66387"/>
<dbReference type="Proteomes" id="UP000002481">
    <property type="component" value="Chromosome"/>
</dbReference>
<dbReference type="GO" id="GO:0005829">
    <property type="term" value="C:cytosol"/>
    <property type="evidence" value="ECO:0007669"/>
    <property type="project" value="TreeGrafter"/>
</dbReference>
<dbReference type="GO" id="GO:0015935">
    <property type="term" value="C:small ribosomal subunit"/>
    <property type="evidence" value="ECO:0007669"/>
    <property type="project" value="TreeGrafter"/>
</dbReference>
<dbReference type="GO" id="GO:0019843">
    <property type="term" value="F:rRNA binding"/>
    <property type="evidence" value="ECO:0007669"/>
    <property type="project" value="UniProtKB-UniRule"/>
</dbReference>
<dbReference type="GO" id="GO:0003735">
    <property type="term" value="F:structural constituent of ribosome"/>
    <property type="evidence" value="ECO:0007669"/>
    <property type="project" value="InterPro"/>
</dbReference>
<dbReference type="GO" id="GO:0000049">
    <property type="term" value="F:tRNA binding"/>
    <property type="evidence" value="ECO:0007669"/>
    <property type="project" value="UniProtKB-UniRule"/>
</dbReference>
<dbReference type="GO" id="GO:0006412">
    <property type="term" value="P:translation"/>
    <property type="evidence" value="ECO:0007669"/>
    <property type="project" value="UniProtKB-UniRule"/>
</dbReference>
<dbReference type="FunFam" id="1.10.8.50:FF:000001">
    <property type="entry name" value="30S ribosomal protein S13"/>
    <property type="match status" value="1"/>
</dbReference>
<dbReference type="FunFam" id="4.10.910.10:FF:000001">
    <property type="entry name" value="30S ribosomal protein S13"/>
    <property type="match status" value="1"/>
</dbReference>
<dbReference type="Gene3D" id="1.10.8.50">
    <property type="match status" value="1"/>
</dbReference>
<dbReference type="Gene3D" id="4.10.910.10">
    <property type="entry name" value="30s ribosomal protein s13, domain 2"/>
    <property type="match status" value="1"/>
</dbReference>
<dbReference type="HAMAP" id="MF_01315">
    <property type="entry name" value="Ribosomal_uS13"/>
    <property type="match status" value="1"/>
</dbReference>
<dbReference type="InterPro" id="IPR027437">
    <property type="entry name" value="Rbsml_uS13_C"/>
</dbReference>
<dbReference type="InterPro" id="IPR001892">
    <property type="entry name" value="Ribosomal_uS13"/>
</dbReference>
<dbReference type="InterPro" id="IPR010979">
    <property type="entry name" value="Ribosomal_uS13-like_H2TH"/>
</dbReference>
<dbReference type="InterPro" id="IPR019980">
    <property type="entry name" value="Ribosomal_uS13_bac-type"/>
</dbReference>
<dbReference type="InterPro" id="IPR018269">
    <property type="entry name" value="Ribosomal_uS13_CS"/>
</dbReference>
<dbReference type="NCBIfam" id="TIGR03631">
    <property type="entry name" value="uS13_bact"/>
    <property type="match status" value="1"/>
</dbReference>
<dbReference type="PANTHER" id="PTHR10871">
    <property type="entry name" value="30S RIBOSOMAL PROTEIN S13/40S RIBOSOMAL PROTEIN S18"/>
    <property type="match status" value="1"/>
</dbReference>
<dbReference type="PANTHER" id="PTHR10871:SF1">
    <property type="entry name" value="SMALL RIBOSOMAL SUBUNIT PROTEIN US13M"/>
    <property type="match status" value="1"/>
</dbReference>
<dbReference type="Pfam" id="PF00416">
    <property type="entry name" value="Ribosomal_S13"/>
    <property type="match status" value="1"/>
</dbReference>
<dbReference type="PIRSF" id="PIRSF002134">
    <property type="entry name" value="Ribosomal_S13"/>
    <property type="match status" value="1"/>
</dbReference>
<dbReference type="SUPFAM" id="SSF46946">
    <property type="entry name" value="S13-like H2TH domain"/>
    <property type="match status" value="1"/>
</dbReference>
<dbReference type="PROSITE" id="PS00646">
    <property type="entry name" value="RIBOSOMAL_S13_1"/>
    <property type="match status" value="1"/>
</dbReference>
<dbReference type="PROSITE" id="PS50159">
    <property type="entry name" value="RIBOSOMAL_S13_2"/>
    <property type="match status" value="1"/>
</dbReference>
<feature type="chain" id="PRO_0000132135" description="Small ribosomal subunit protein uS13">
    <location>
        <begin position="1"/>
        <end position="121"/>
    </location>
</feature>
<feature type="region of interest" description="Disordered" evidence="2">
    <location>
        <begin position="91"/>
        <end position="121"/>
    </location>
</feature>
<reference key="1">
    <citation type="journal article" date="2001" name="Lancet">
        <title>Whole genome sequencing of meticillin-resistant Staphylococcus aureus.</title>
        <authorList>
            <person name="Kuroda M."/>
            <person name="Ohta T."/>
            <person name="Uchiyama I."/>
            <person name="Baba T."/>
            <person name="Yuzawa H."/>
            <person name="Kobayashi I."/>
            <person name="Cui L."/>
            <person name="Oguchi A."/>
            <person name="Aoki K."/>
            <person name="Nagai Y."/>
            <person name="Lian J.-Q."/>
            <person name="Ito T."/>
            <person name="Kanamori M."/>
            <person name="Matsumaru H."/>
            <person name="Maruyama A."/>
            <person name="Murakami H."/>
            <person name="Hosoyama A."/>
            <person name="Mizutani-Ui Y."/>
            <person name="Takahashi N.K."/>
            <person name="Sawano T."/>
            <person name="Inoue R."/>
            <person name="Kaito C."/>
            <person name="Sekimizu K."/>
            <person name="Hirakawa H."/>
            <person name="Kuhara S."/>
            <person name="Goto S."/>
            <person name="Yabuzaki J."/>
            <person name="Kanehisa M."/>
            <person name="Yamashita A."/>
            <person name="Oshima K."/>
            <person name="Furuya K."/>
            <person name="Yoshino C."/>
            <person name="Shiba T."/>
            <person name="Hattori M."/>
            <person name="Ogasawara N."/>
            <person name="Hayashi H."/>
            <person name="Hiramatsu K."/>
        </authorList>
    </citation>
    <scope>NUCLEOTIDE SEQUENCE [LARGE SCALE GENOMIC DNA]</scope>
    <source>
        <strain>Mu50 / ATCC 700699</strain>
    </source>
</reference>
<comment type="function">
    <text evidence="1">Located at the top of the head of the 30S subunit, it contacts several helices of the 16S rRNA. In the 70S ribosome it contacts the 23S rRNA (bridge B1a) and protein L5 of the 50S subunit (bridge B1b), connecting the 2 subunits; these bridges are implicated in subunit movement. Contacts the tRNAs in the A and P-sites.</text>
</comment>
<comment type="subunit">
    <text evidence="1">Part of the 30S ribosomal subunit. Forms a loose heterodimer with protein S19. Forms two bridges to the 50S subunit in the 70S ribosome.</text>
</comment>
<comment type="similarity">
    <text evidence="1">Belongs to the universal ribosomal protein uS13 family.</text>
</comment>
<organism>
    <name type="scientific">Staphylococcus aureus (strain Mu50 / ATCC 700699)</name>
    <dbReference type="NCBI Taxonomy" id="158878"/>
    <lineage>
        <taxon>Bacteria</taxon>
        <taxon>Bacillati</taxon>
        <taxon>Bacillota</taxon>
        <taxon>Bacilli</taxon>
        <taxon>Bacillales</taxon>
        <taxon>Staphylococcaceae</taxon>
        <taxon>Staphylococcus</taxon>
    </lineage>
</organism>
<name>RS13_STAAM</name>